<accession>Q43033</accession>
<organism>
    <name type="scientific">Petroselinum crispum</name>
    <name type="common">Parsley</name>
    <name type="synonym">Petroselinum hortense</name>
    <dbReference type="NCBI Taxonomy" id="4043"/>
    <lineage>
        <taxon>Eukaryota</taxon>
        <taxon>Viridiplantae</taxon>
        <taxon>Streptophyta</taxon>
        <taxon>Embryophyta</taxon>
        <taxon>Tracheophyta</taxon>
        <taxon>Spermatophyta</taxon>
        <taxon>Magnoliopsida</taxon>
        <taxon>eudicotyledons</taxon>
        <taxon>Gunneridae</taxon>
        <taxon>Pentapetalae</taxon>
        <taxon>asterids</taxon>
        <taxon>campanulids</taxon>
        <taxon>Apiales</taxon>
        <taxon>Apiaceae</taxon>
        <taxon>Apioideae</taxon>
        <taxon>apioid superclade</taxon>
        <taxon>Apieae</taxon>
        <taxon>Petroselinum</taxon>
    </lineage>
</organism>
<proteinExistence type="evidence at transcript level"/>
<reference key="1">
    <citation type="journal article" date="1995" name="Proc. Natl. Acad. Sci. U.S.A.">
        <title>Modes of expression and common structural features of the complete phenylalanine ammonia-lyase gene family in parsley.</title>
        <authorList>
            <person name="Logemann E."/>
            <person name="Parniske M."/>
            <person name="Hahlbrock K."/>
        </authorList>
    </citation>
    <scope>NUCLEOTIDE SEQUENCE [MRNA]</scope>
</reference>
<protein>
    <recommendedName>
        <fullName>Trans-cinnamate 4-monooxygenase</fullName>
        <ecNumber evidence="1">1.14.14.91</ecNumber>
    </recommendedName>
    <alternativeName>
        <fullName>Cinnamic acid 4-hydroxylase</fullName>
        <shortName>C4H</shortName>
        <shortName>CA4H</shortName>
    </alternativeName>
    <alternativeName>
        <fullName>Cytochrome P450 73</fullName>
    </alternativeName>
    <alternativeName>
        <fullName>Cytochrome P450C4H</fullName>
    </alternativeName>
</protein>
<comment type="function">
    <text evidence="1">Catalyzes the first oxidative step of the phenylpropanoid pathway in higher plants by transforming trans-cinnamate into p-coumarate (By similarity). The compounds formed by this pathway are essential components for lignification, pollination, and defense against ultraviolet light, predators and pathogens (By similarity).</text>
</comment>
<comment type="catalytic activity">
    <reaction evidence="1">
        <text>(E)-cinnamate + reduced [NADPH--hemoprotein reductase] + O2 = (E)-4-coumarate + oxidized [NADPH--hemoprotein reductase] + H2O + H(+)</text>
        <dbReference type="Rhea" id="RHEA:10608"/>
        <dbReference type="Rhea" id="RHEA-COMP:11964"/>
        <dbReference type="Rhea" id="RHEA-COMP:11965"/>
        <dbReference type="ChEBI" id="CHEBI:12876"/>
        <dbReference type="ChEBI" id="CHEBI:15377"/>
        <dbReference type="ChEBI" id="CHEBI:15378"/>
        <dbReference type="ChEBI" id="CHEBI:15379"/>
        <dbReference type="ChEBI" id="CHEBI:15669"/>
        <dbReference type="ChEBI" id="CHEBI:57618"/>
        <dbReference type="ChEBI" id="CHEBI:58210"/>
        <dbReference type="EC" id="1.14.14.91"/>
    </reaction>
</comment>
<comment type="cofactor">
    <cofactor evidence="2">
        <name>heme</name>
        <dbReference type="ChEBI" id="CHEBI:30413"/>
    </cofactor>
</comment>
<comment type="pathway">
    <text evidence="4">Phenylpropanoid metabolism; trans-4-coumarate biosynthesis; trans-4-coumarate from trans-cinnamate: step 1/1.</text>
</comment>
<comment type="subcellular location">
    <subcellularLocation>
        <location evidence="3">Membrane</location>
        <topology evidence="3">Single-pass membrane protein</topology>
    </subcellularLocation>
</comment>
<comment type="similarity">
    <text evidence="4">Belongs to the cytochrome P450 family.</text>
</comment>
<keyword id="KW-0349">Heme</keyword>
<keyword id="KW-0408">Iron</keyword>
<keyword id="KW-0472">Membrane</keyword>
<keyword id="KW-0479">Metal-binding</keyword>
<keyword id="KW-0503">Monooxygenase</keyword>
<keyword id="KW-0560">Oxidoreductase</keyword>
<keyword id="KW-0812">Transmembrane</keyword>
<keyword id="KW-1133">Transmembrane helix</keyword>
<evidence type="ECO:0000250" key="1">
    <source>
        <dbReference type="UniProtKB" id="Q04468"/>
    </source>
</evidence>
<evidence type="ECO:0000250" key="2">
    <source>
        <dbReference type="UniProtKB" id="Q94IP1"/>
    </source>
</evidence>
<evidence type="ECO:0000255" key="3"/>
<evidence type="ECO:0000305" key="4"/>
<dbReference type="EC" id="1.14.14.91" evidence="1"/>
<dbReference type="EMBL" id="L38898">
    <property type="protein sequence ID" value="AAC41660.1"/>
    <property type="molecule type" value="mRNA"/>
</dbReference>
<dbReference type="PIR" id="T14907">
    <property type="entry name" value="T14907"/>
</dbReference>
<dbReference type="SMR" id="Q43033"/>
<dbReference type="BRENDA" id="1.14.14.91">
    <property type="organism ID" value="4694"/>
</dbReference>
<dbReference type="UniPathway" id="UPA00825">
    <property type="reaction ID" value="UER00789"/>
</dbReference>
<dbReference type="GO" id="GO:0016020">
    <property type="term" value="C:membrane"/>
    <property type="evidence" value="ECO:0007669"/>
    <property type="project" value="UniProtKB-SubCell"/>
</dbReference>
<dbReference type="GO" id="GO:0020037">
    <property type="term" value="F:heme binding"/>
    <property type="evidence" value="ECO:0007669"/>
    <property type="project" value="InterPro"/>
</dbReference>
<dbReference type="GO" id="GO:0005506">
    <property type="term" value="F:iron ion binding"/>
    <property type="evidence" value="ECO:0007669"/>
    <property type="project" value="InterPro"/>
</dbReference>
<dbReference type="GO" id="GO:0016710">
    <property type="term" value="F:trans-cinnamate 4-monooxygenase activity"/>
    <property type="evidence" value="ECO:0007669"/>
    <property type="project" value="UniProtKB-EC"/>
</dbReference>
<dbReference type="GO" id="GO:0009808">
    <property type="term" value="P:lignin metabolic process"/>
    <property type="evidence" value="ECO:0007669"/>
    <property type="project" value="TreeGrafter"/>
</dbReference>
<dbReference type="CDD" id="cd11074">
    <property type="entry name" value="CYP73"/>
    <property type="match status" value="1"/>
</dbReference>
<dbReference type="FunFam" id="1.10.630.10:FF:000013">
    <property type="entry name" value="Trans-cinnamate 4-monooxygenase"/>
    <property type="match status" value="1"/>
</dbReference>
<dbReference type="Gene3D" id="1.10.630.10">
    <property type="entry name" value="Cytochrome P450"/>
    <property type="match status" value="1"/>
</dbReference>
<dbReference type="InterPro" id="IPR001128">
    <property type="entry name" value="Cyt_P450"/>
</dbReference>
<dbReference type="InterPro" id="IPR017972">
    <property type="entry name" value="Cyt_P450_CS"/>
</dbReference>
<dbReference type="InterPro" id="IPR002401">
    <property type="entry name" value="Cyt_P450_E_grp-I"/>
</dbReference>
<dbReference type="InterPro" id="IPR036396">
    <property type="entry name" value="Cyt_P450_sf"/>
</dbReference>
<dbReference type="PANTHER" id="PTHR47948">
    <property type="entry name" value="TRANS-CINNAMATE 4-MONOOXYGENASE"/>
    <property type="match status" value="1"/>
</dbReference>
<dbReference type="PANTHER" id="PTHR47948:SF4">
    <property type="entry name" value="TRANS-CINNAMATE 4-MONOOXYGENASE"/>
    <property type="match status" value="1"/>
</dbReference>
<dbReference type="Pfam" id="PF00067">
    <property type="entry name" value="p450"/>
    <property type="match status" value="1"/>
</dbReference>
<dbReference type="PRINTS" id="PR00463">
    <property type="entry name" value="EP450I"/>
</dbReference>
<dbReference type="PRINTS" id="PR00385">
    <property type="entry name" value="P450"/>
</dbReference>
<dbReference type="SUPFAM" id="SSF48264">
    <property type="entry name" value="Cytochrome P450"/>
    <property type="match status" value="1"/>
</dbReference>
<dbReference type="PROSITE" id="PS00086">
    <property type="entry name" value="CYTOCHROME_P450"/>
    <property type="match status" value="1"/>
</dbReference>
<gene>
    <name type="primary">CYP73A10</name>
    <name type="synonym">CYP73</name>
</gene>
<feature type="chain" id="PRO_0000052249" description="Trans-cinnamate 4-monooxygenase">
    <location>
        <begin position="1"/>
        <end position="506"/>
    </location>
</feature>
<feature type="transmembrane region" description="Helical" evidence="3">
    <location>
        <begin position="3"/>
        <end position="23"/>
    </location>
</feature>
<feature type="binding site" evidence="2">
    <location>
        <begin position="214"/>
        <end position="219"/>
    </location>
    <ligand>
        <name>(E)-cinnamate</name>
        <dbReference type="ChEBI" id="CHEBI:15669"/>
    </ligand>
</feature>
<feature type="binding site" evidence="2">
    <location>
        <position position="307"/>
    </location>
    <ligand>
        <name>(E)-cinnamate</name>
        <dbReference type="ChEBI" id="CHEBI:15669"/>
    </ligand>
</feature>
<feature type="binding site" description="axial binding residue" evidence="2">
    <location>
        <position position="448"/>
    </location>
    <ligand>
        <name>heme</name>
        <dbReference type="ChEBI" id="CHEBI:30413"/>
    </ligand>
    <ligandPart>
        <name>Fe</name>
        <dbReference type="ChEBI" id="CHEBI:18248"/>
    </ligandPart>
</feature>
<sequence>MMDFVLLEKALLGLFIATIVAITISKLRGKKLKLPPGPIPVPVFGNWLQVGDDLNQRNLVDYAKKFGDLFMLRMGQRNLVVVSSPELAKDVLHTQGVEFGSRTRNVVFDIFTGKGQDMVFTVYSEHWRKMRRIMTVPFFTNKVVQQYRFGWEDEAARVVEDVKANPEAATNGIVLRNRLQLLMYNNMYRIMFDRRFESVDDPLFLKLKALNGERSRLAQSFEYHFGDFIPILRPFLRGYLKLCQEIKDKRLKLFKDYFVDERKKLESIKSVDNNSLKCAIDHIIEAQQKGEINEDNVLYIVENINVAAIETTLWSIEWGIAELVNNPEIQKKLRHELDTVLGAGVQICEPDVQKLPYLQAVIKETLRYRMAIPLLVPHMNLHDAKLAGYDIPAESKILVNAWWLANNPAHWNKPDEFRPERFLEEESKVEANGNDFKYIPFGVGRRSCPGIILALPILGIVIGRLVQNFELLPPPGQSKIDTAEKGGQFSLQILKHSTIVCKPRSL</sequence>
<name>TCMO_PETCR</name>